<sequence length="219" mass="24715">MALPLSGTRHLTRALLSNVTLMAPPRIPSSVHYGGSRLGCSTRFFSIRCGANRSGSTYSPLNSGSNFSDRPPTEMAPLFPGCDYEHWLIVMDKPGGEGATKQQMIDCYIQTLAKVVGSEEEAKKRIYNVSCERYLGFGCEIDEETSTKLEGLPGVLFVLPDSYVDPENKDYGAELFVNGEIVQRSPERQRRVEPQPQRAQDRPRYNDRTRYSRRRENTR</sequence>
<accession>O22793</accession>
<accession>O24657</accession>
<accession>Q7DLI5</accession>
<accession>Q8L949</accession>
<dbReference type="EMBL" id="Z86094">
    <property type="protein sequence ID" value="CAB06698.1"/>
    <property type="status" value="ALT_FRAME"/>
    <property type="molecule type" value="mRNA"/>
</dbReference>
<dbReference type="EMBL" id="Y14850">
    <property type="protein sequence ID" value="CAA75115.1"/>
    <property type="molecule type" value="mRNA"/>
</dbReference>
<dbReference type="EMBL" id="Y14851">
    <property type="protein sequence ID" value="CAA75116.1"/>
    <property type="molecule type" value="Genomic_DNA"/>
</dbReference>
<dbReference type="EMBL" id="AC002332">
    <property type="protein sequence ID" value="AAB80660.1"/>
    <property type="molecule type" value="Genomic_DNA"/>
</dbReference>
<dbReference type="EMBL" id="CP002685">
    <property type="status" value="NOT_ANNOTATED_CDS"/>
    <property type="molecule type" value="Genomic_DNA"/>
</dbReference>
<dbReference type="EMBL" id="AF446351">
    <property type="protein sequence ID" value="AAL48226.1"/>
    <property type="molecule type" value="mRNA"/>
</dbReference>
<dbReference type="EMBL" id="AY097425">
    <property type="protein sequence ID" value="AAM19941.1"/>
    <property type="molecule type" value="mRNA"/>
</dbReference>
<dbReference type="EMBL" id="AK228465">
    <property type="protein sequence ID" value="BAF00392.1"/>
    <property type="molecule type" value="mRNA"/>
</dbReference>
<dbReference type="EMBL" id="AY088637">
    <property type="protein sequence ID" value="AAM66959.1"/>
    <property type="molecule type" value="mRNA"/>
</dbReference>
<dbReference type="PIR" id="D84745">
    <property type="entry name" value="D84745"/>
</dbReference>
<dbReference type="PIR" id="T52623">
    <property type="entry name" value="T52623"/>
</dbReference>
<dbReference type="PDB" id="5YDG">
    <property type="method" value="X-ray"/>
    <property type="resolution" value="2.40 A"/>
    <property type="chains" value="A/B=79-194"/>
</dbReference>
<dbReference type="PDBsum" id="5YDG"/>
<dbReference type="SMR" id="O22793"/>
<dbReference type="FunCoup" id="O22793">
    <property type="interactions" value="8"/>
</dbReference>
<dbReference type="IntAct" id="O22793">
    <property type="interactions" value="4"/>
</dbReference>
<dbReference type="STRING" id="3702.O22793"/>
<dbReference type="PaxDb" id="3702-AT2G33430.1"/>
<dbReference type="Araport" id="AT2G33430"/>
<dbReference type="TAIR" id="AT2G33430"/>
<dbReference type="eggNOG" id="ENOG502QPXC">
    <property type="taxonomic scope" value="Eukaryota"/>
</dbReference>
<dbReference type="HOGENOM" id="CLU_073703_1_0_1"/>
<dbReference type="InParanoid" id="O22793"/>
<dbReference type="PhylomeDB" id="O22793"/>
<dbReference type="PRO" id="PR:O22793"/>
<dbReference type="Proteomes" id="UP000006548">
    <property type="component" value="Chromosome 2"/>
</dbReference>
<dbReference type="ExpressionAtlas" id="O22793">
    <property type="expression patterns" value="baseline and differential"/>
</dbReference>
<dbReference type="GO" id="GO:0009507">
    <property type="term" value="C:chloroplast"/>
    <property type="evidence" value="ECO:0000314"/>
    <property type="project" value="TAIR"/>
</dbReference>
<dbReference type="GO" id="GO:0005783">
    <property type="term" value="C:endoplasmic reticulum"/>
    <property type="evidence" value="ECO:0007005"/>
    <property type="project" value="TAIR"/>
</dbReference>
<dbReference type="GO" id="GO:0005739">
    <property type="term" value="C:mitochondrion"/>
    <property type="evidence" value="ECO:0000318"/>
    <property type="project" value="GO_Central"/>
</dbReference>
<dbReference type="GO" id="GO:0046983">
    <property type="term" value="F:protein dimerization activity"/>
    <property type="evidence" value="ECO:0000353"/>
    <property type="project" value="TAIR"/>
</dbReference>
<dbReference type="GO" id="GO:0042803">
    <property type="term" value="F:protein homodimerization activity"/>
    <property type="evidence" value="ECO:0000353"/>
    <property type="project" value="TAIR"/>
</dbReference>
<dbReference type="GO" id="GO:0016554">
    <property type="term" value="P:cytidine to uridine editing"/>
    <property type="evidence" value="ECO:0007669"/>
    <property type="project" value="InterPro"/>
</dbReference>
<dbReference type="GO" id="GO:0002103">
    <property type="term" value="P:endonucleolytic cleavage of tetracistronic rRNA transcript (SSU-rRNA, LSU-rRNA, 4.5S-rRNA, 5S-rRNA)"/>
    <property type="evidence" value="ECO:0000315"/>
    <property type="project" value="TAIR"/>
</dbReference>
<dbReference type="GO" id="GO:0080156">
    <property type="term" value="P:mitochondrial mRNA modification"/>
    <property type="evidence" value="ECO:0000318"/>
    <property type="project" value="GO_Central"/>
</dbReference>
<dbReference type="GO" id="GO:0006397">
    <property type="term" value="P:mRNA processing"/>
    <property type="evidence" value="ECO:0007669"/>
    <property type="project" value="UniProtKB-KW"/>
</dbReference>
<dbReference type="GO" id="GO:0009657">
    <property type="term" value="P:plastid organization"/>
    <property type="evidence" value="ECO:0000315"/>
    <property type="project" value="TAIR"/>
</dbReference>
<dbReference type="FunFam" id="3.30.70.80:FF:000001">
    <property type="entry name" value="Multiple organellar RNA editing factor"/>
    <property type="match status" value="1"/>
</dbReference>
<dbReference type="Gene3D" id="3.30.70.80">
    <property type="entry name" value="Peptidase S8 propeptide/proteinase inhibitor I9"/>
    <property type="match status" value="1"/>
</dbReference>
<dbReference type="InterPro" id="IPR039206">
    <property type="entry name" value="MORF/ORRM1/DAG-like"/>
</dbReference>
<dbReference type="InterPro" id="IPR054059">
    <property type="entry name" value="MORF/ORRM1/DAG-like_MORF"/>
</dbReference>
<dbReference type="InterPro" id="IPR037045">
    <property type="entry name" value="S8pro/Inhibitor_I9_sf"/>
</dbReference>
<dbReference type="PANTHER" id="PTHR31346:SF7">
    <property type="entry name" value="MULTIPLE ORGANELLAR RNA EDITING FACTOR 2, CHLOROPLASTIC-RELATED"/>
    <property type="match status" value="1"/>
</dbReference>
<dbReference type="PANTHER" id="PTHR31346">
    <property type="entry name" value="MULTIPLE ORGANELLAR RNA EDITING FACTOR 2, CHLOROPLASTIC-RELATED-RELATED"/>
    <property type="match status" value="1"/>
</dbReference>
<dbReference type="Pfam" id="PF21864">
    <property type="entry name" value="MORF_dom"/>
    <property type="match status" value="1"/>
</dbReference>
<organism>
    <name type="scientific">Arabidopsis thaliana</name>
    <name type="common">Mouse-ear cress</name>
    <dbReference type="NCBI Taxonomy" id="3702"/>
    <lineage>
        <taxon>Eukaryota</taxon>
        <taxon>Viridiplantae</taxon>
        <taxon>Streptophyta</taxon>
        <taxon>Embryophyta</taxon>
        <taxon>Tracheophyta</taxon>
        <taxon>Spermatophyta</taxon>
        <taxon>Magnoliopsida</taxon>
        <taxon>eudicotyledons</taxon>
        <taxon>Gunneridae</taxon>
        <taxon>Pentapetalae</taxon>
        <taxon>rosids</taxon>
        <taxon>malvids</taxon>
        <taxon>Brassicales</taxon>
        <taxon>Brassicaceae</taxon>
        <taxon>Camelineae</taxon>
        <taxon>Arabidopsis</taxon>
    </lineage>
</organism>
<proteinExistence type="evidence at protein level"/>
<feature type="transit peptide" description="Chloroplast" evidence="1">
    <location>
        <begin position="1"/>
        <end position="48"/>
    </location>
</feature>
<feature type="chain" id="PRO_0000432525" description="Multiple organellar RNA editing factor 2, chloroplastic">
    <location>
        <begin position="49"/>
        <end position="219"/>
    </location>
</feature>
<feature type="region of interest" description="Disordered" evidence="2">
    <location>
        <begin position="182"/>
        <end position="219"/>
    </location>
</feature>
<feature type="compositionally biased region" description="Basic and acidic residues" evidence="2">
    <location>
        <begin position="185"/>
        <end position="219"/>
    </location>
</feature>
<feature type="sequence conflict" description="In Ref. 2; CAA75115/CAA75116." evidence="14" ref="2">
    <original>QQ</original>
    <variation>HE</variation>
    <location>
        <begin position="102"/>
        <end position="103"/>
    </location>
</feature>
<feature type="strand" evidence="16">
    <location>
        <begin position="84"/>
        <end position="93"/>
    </location>
</feature>
<feature type="helix" evidence="16">
    <location>
        <begin position="101"/>
        <end position="116"/>
    </location>
</feature>
<feature type="helix" evidence="16">
    <location>
        <begin position="119"/>
        <end position="125"/>
    </location>
</feature>
<feature type="strand" evidence="16">
    <location>
        <begin position="126"/>
        <end position="140"/>
    </location>
</feature>
<feature type="helix" evidence="16">
    <location>
        <begin position="143"/>
        <end position="151"/>
    </location>
</feature>
<feature type="strand" evidence="16">
    <location>
        <begin position="155"/>
        <end position="160"/>
    </location>
</feature>
<feature type="helix" evidence="16">
    <location>
        <begin position="166"/>
        <end position="168"/>
    </location>
</feature>
<feature type="strand" evidence="16">
    <location>
        <begin position="173"/>
        <end position="177"/>
    </location>
</feature>
<feature type="strand" evidence="16">
    <location>
        <begin position="180"/>
        <end position="182"/>
    </location>
</feature>
<feature type="helix" evidence="16">
    <location>
        <begin position="186"/>
        <end position="191"/>
    </location>
</feature>
<name>MORF2_ARATH</name>
<evidence type="ECO:0000255" key="1"/>
<evidence type="ECO:0000256" key="2">
    <source>
        <dbReference type="SAM" id="MobiDB-lite"/>
    </source>
</evidence>
<evidence type="ECO:0000269" key="3">
    <source>
    </source>
</evidence>
<evidence type="ECO:0000269" key="4">
    <source>
    </source>
</evidence>
<evidence type="ECO:0000269" key="5">
    <source>
    </source>
</evidence>
<evidence type="ECO:0000269" key="6">
    <source>
    </source>
</evidence>
<evidence type="ECO:0000269" key="7">
    <source>
    </source>
</evidence>
<evidence type="ECO:0000269" key="8">
    <source>
    </source>
</evidence>
<evidence type="ECO:0000269" key="9">
    <source>
    </source>
</evidence>
<evidence type="ECO:0000269" key="10">
    <source>
    </source>
</evidence>
<evidence type="ECO:0000303" key="11">
    <source>
    </source>
</evidence>
<evidence type="ECO:0000303" key="12">
    <source>
    </source>
</evidence>
<evidence type="ECO:0000303" key="13">
    <source>
    </source>
</evidence>
<evidence type="ECO:0000305" key="14"/>
<evidence type="ECO:0000312" key="15">
    <source>
        <dbReference type="Araport" id="AT2G33430"/>
    </source>
</evidence>
<evidence type="ECO:0007829" key="16">
    <source>
        <dbReference type="PDB" id="5YDG"/>
    </source>
</evidence>
<gene>
    <name evidence="12" type="primary">MORF2</name>
    <name evidence="11" type="synonym">DAL1</name>
    <name evidence="13" type="synonym">RIP2</name>
    <name evidence="15" type="ordered locus">At2g33430</name>
</gene>
<keyword id="KW-0002">3D-structure</keyword>
<keyword id="KW-0150">Chloroplast</keyword>
<keyword id="KW-0507">mRNA processing</keyword>
<keyword id="KW-0934">Plastid</keyword>
<keyword id="KW-1185">Reference proteome</keyword>
<keyword id="KW-0809">Transit peptide</keyword>
<reference key="1">
    <citation type="journal article" date="1997" name="Proc. Natl. Acad. Sci. U.S.A.">
        <title>Efficient gene tagging in Arabidopsis thaliana using a gene trap approach.</title>
        <authorList>
            <person name="Babiychuk E."/>
            <person name="Fuangthong M."/>
            <person name="Van Montagu M."/>
            <person name="Inze D."/>
            <person name="Kushnir S."/>
        </authorList>
    </citation>
    <scope>NUCLEOTIDE SEQUENCE [MRNA]</scope>
    <scope>FUNCTION</scope>
    <scope>DISRUPTION PHENOTYPE</scope>
    <source>
        <tissue>Leaf</tissue>
    </source>
</reference>
<reference key="2">
    <citation type="journal article" date="2003" name="Plant Mol. Biol.">
        <title>The Arabidopsis nuclear DAL gene encodes a chloroplast protein which is required for the maturation of the plastid ribosomal RNAs and is essential for chloroplast differentiation.</title>
        <authorList>
            <person name="Bisanz C."/>
            <person name="Begot L."/>
            <person name="Carol P."/>
            <person name="Perez P."/>
            <person name="Bligny M."/>
            <person name="Pesey H."/>
            <person name="Gallois J.L."/>
            <person name="Lerbs-Mache S."/>
            <person name="Mache R."/>
        </authorList>
    </citation>
    <scope>NUCLEOTIDE SEQUENCE [GENOMIC DNA / MRNA]</scope>
    <scope>FUNCTION</scope>
    <scope>SUBCELLULAR LOCATION</scope>
    <scope>DISRUPTION PHENOTYPE</scope>
</reference>
<reference key="3">
    <citation type="journal article" date="1999" name="Nature">
        <title>Sequence and analysis of chromosome 2 of the plant Arabidopsis thaliana.</title>
        <authorList>
            <person name="Lin X."/>
            <person name="Kaul S."/>
            <person name="Rounsley S.D."/>
            <person name="Shea T.P."/>
            <person name="Benito M.-I."/>
            <person name="Town C.D."/>
            <person name="Fujii C.Y."/>
            <person name="Mason T.M."/>
            <person name="Bowman C.L."/>
            <person name="Barnstead M.E."/>
            <person name="Feldblyum T.V."/>
            <person name="Buell C.R."/>
            <person name="Ketchum K.A."/>
            <person name="Lee J.J."/>
            <person name="Ronning C.M."/>
            <person name="Koo H.L."/>
            <person name="Moffat K.S."/>
            <person name="Cronin L.A."/>
            <person name="Shen M."/>
            <person name="Pai G."/>
            <person name="Van Aken S."/>
            <person name="Umayam L."/>
            <person name="Tallon L.J."/>
            <person name="Gill J.E."/>
            <person name="Adams M.D."/>
            <person name="Carrera A.J."/>
            <person name="Creasy T.H."/>
            <person name="Goodman H.M."/>
            <person name="Somerville C.R."/>
            <person name="Copenhaver G.P."/>
            <person name="Preuss D."/>
            <person name="Nierman W.C."/>
            <person name="White O."/>
            <person name="Eisen J.A."/>
            <person name="Salzberg S.L."/>
            <person name="Fraser C.M."/>
            <person name="Venter J.C."/>
        </authorList>
    </citation>
    <scope>NUCLEOTIDE SEQUENCE [LARGE SCALE GENOMIC DNA]</scope>
    <source>
        <strain>cv. Columbia</strain>
    </source>
</reference>
<reference key="4">
    <citation type="journal article" date="2017" name="Plant J.">
        <title>Araport11: a complete reannotation of the Arabidopsis thaliana reference genome.</title>
        <authorList>
            <person name="Cheng C.Y."/>
            <person name="Krishnakumar V."/>
            <person name="Chan A.P."/>
            <person name="Thibaud-Nissen F."/>
            <person name="Schobel S."/>
            <person name="Town C.D."/>
        </authorList>
    </citation>
    <scope>GENOME REANNOTATION</scope>
    <source>
        <strain>cv. Columbia</strain>
    </source>
</reference>
<reference key="5">
    <citation type="journal article" date="2003" name="Science">
        <title>Empirical analysis of transcriptional activity in the Arabidopsis genome.</title>
        <authorList>
            <person name="Yamada K."/>
            <person name="Lim J."/>
            <person name="Dale J.M."/>
            <person name="Chen H."/>
            <person name="Shinn P."/>
            <person name="Palm C.J."/>
            <person name="Southwick A.M."/>
            <person name="Wu H.C."/>
            <person name="Kim C.J."/>
            <person name="Nguyen M."/>
            <person name="Pham P.K."/>
            <person name="Cheuk R.F."/>
            <person name="Karlin-Newmann G."/>
            <person name="Liu S.X."/>
            <person name="Lam B."/>
            <person name="Sakano H."/>
            <person name="Wu T."/>
            <person name="Yu G."/>
            <person name="Miranda M."/>
            <person name="Quach H.L."/>
            <person name="Tripp M."/>
            <person name="Chang C.H."/>
            <person name="Lee J.M."/>
            <person name="Toriumi M.J."/>
            <person name="Chan M.M."/>
            <person name="Tang C.C."/>
            <person name="Onodera C.S."/>
            <person name="Deng J.M."/>
            <person name="Akiyama K."/>
            <person name="Ansari Y."/>
            <person name="Arakawa T."/>
            <person name="Banh J."/>
            <person name="Banno F."/>
            <person name="Bowser L."/>
            <person name="Brooks S.Y."/>
            <person name="Carninci P."/>
            <person name="Chao Q."/>
            <person name="Choy N."/>
            <person name="Enju A."/>
            <person name="Goldsmith A.D."/>
            <person name="Gurjal M."/>
            <person name="Hansen N.F."/>
            <person name="Hayashizaki Y."/>
            <person name="Johnson-Hopson C."/>
            <person name="Hsuan V.W."/>
            <person name="Iida K."/>
            <person name="Karnes M."/>
            <person name="Khan S."/>
            <person name="Koesema E."/>
            <person name="Ishida J."/>
            <person name="Jiang P.X."/>
            <person name="Jones T."/>
            <person name="Kawai J."/>
            <person name="Kamiya A."/>
            <person name="Meyers C."/>
            <person name="Nakajima M."/>
            <person name="Narusaka M."/>
            <person name="Seki M."/>
            <person name="Sakurai T."/>
            <person name="Satou M."/>
            <person name="Tamse R."/>
            <person name="Vaysberg M."/>
            <person name="Wallender E.K."/>
            <person name="Wong C."/>
            <person name="Yamamura Y."/>
            <person name="Yuan S."/>
            <person name="Shinozaki K."/>
            <person name="Davis R.W."/>
            <person name="Theologis A."/>
            <person name="Ecker J.R."/>
        </authorList>
    </citation>
    <scope>NUCLEOTIDE SEQUENCE [LARGE SCALE MRNA]</scope>
    <source>
        <strain>cv. Columbia</strain>
    </source>
</reference>
<reference key="6">
    <citation type="submission" date="2006-07" db="EMBL/GenBank/DDBJ databases">
        <title>Large-scale analysis of RIKEN Arabidopsis full-length (RAFL) cDNAs.</title>
        <authorList>
            <person name="Totoki Y."/>
            <person name="Seki M."/>
            <person name="Ishida J."/>
            <person name="Nakajima M."/>
            <person name="Enju A."/>
            <person name="Kamiya A."/>
            <person name="Narusaka M."/>
            <person name="Shin-i T."/>
            <person name="Nakagawa M."/>
            <person name="Sakamoto N."/>
            <person name="Oishi K."/>
            <person name="Kohara Y."/>
            <person name="Kobayashi M."/>
            <person name="Toyoda A."/>
            <person name="Sakaki Y."/>
            <person name="Sakurai T."/>
            <person name="Iida K."/>
            <person name="Akiyama K."/>
            <person name="Satou M."/>
            <person name="Toyoda T."/>
            <person name="Konagaya A."/>
            <person name="Carninci P."/>
            <person name="Kawai J."/>
            <person name="Hayashizaki Y."/>
            <person name="Shinozaki K."/>
        </authorList>
    </citation>
    <scope>NUCLEOTIDE SEQUENCE [LARGE SCALE MRNA]</scope>
    <source>
        <strain>cv. Columbia</strain>
    </source>
</reference>
<reference key="7">
    <citation type="submission" date="2002-03" db="EMBL/GenBank/DDBJ databases">
        <title>Full-length cDNA from Arabidopsis thaliana.</title>
        <authorList>
            <person name="Brover V.V."/>
            <person name="Troukhan M.E."/>
            <person name="Alexandrov N.A."/>
            <person name="Lu Y.-P."/>
            <person name="Flavell R.B."/>
            <person name="Feldmann K.A."/>
        </authorList>
    </citation>
    <scope>NUCLEOTIDE SEQUENCE [LARGE SCALE MRNA]</scope>
</reference>
<reference key="8">
    <citation type="journal article" date="2012" name="Proc. Natl. Acad. Sci. U.S.A.">
        <title>Multiple organellar RNA editing factor (MORF) family proteins are required for RNA editing in mitochondria and plastids of plants.</title>
        <authorList>
            <person name="Takenaka M."/>
            <person name="Zehrmann A."/>
            <person name="Verbitskiy D."/>
            <person name="Kugelmann M."/>
            <person name="Hartel B."/>
            <person name="Brennicke A."/>
        </authorList>
    </citation>
    <scope>FUNCTION</scope>
    <scope>INTERACTION WITH MORF9</scope>
    <scope>GENE FAMILY</scope>
    <scope>NOMENCLATURE</scope>
    <scope>DISRUPTION PHENOTYPE</scope>
</reference>
<reference key="9">
    <citation type="journal article" date="2013" name="PLoS Genet.">
        <title>Comprehensive high-resolution analysis of the role of an Arabidopsis gene family in RNA editing.</title>
        <authorList>
            <person name="Bentolila S."/>
            <person name="Oh J."/>
            <person name="Hanson M.R."/>
            <person name="Bukowski R."/>
        </authorList>
    </citation>
    <scope>FUNCTION</scope>
    <scope>GENE FAMILY</scope>
</reference>
<reference key="10">
    <citation type="journal article" date="2014" name="Proc. Natl. Acad. Sci. U.S.A.">
        <title>Tetrapyrrole biosynthetic enzyme protoporphyrinogen IX oxidase 1 is required for plastid RNA editing.</title>
        <authorList>
            <person name="Zhang F."/>
            <person name="Tang W."/>
            <person name="Hedtke B."/>
            <person name="Zhong L."/>
            <person name="Liu L."/>
            <person name="Peng L."/>
            <person name="Lu C."/>
            <person name="Grimm B."/>
            <person name="Lin R."/>
        </authorList>
    </citation>
    <scope>INTERACTION WITH PPOX1</scope>
</reference>
<reference key="11">
    <citation type="journal article" date="2015" name="J. Biol. Chem.">
        <title>Selective homo- and heteromer interactions between the multiple organellar RNA editing factor (MORF) proteins in Arabidopsis thaliana.</title>
        <authorList>
            <person name="Zehrmann A."/>
            <person name="Haertel B."/>
            <person name="Glass F."/>
            <person name="Bayer-Csaszar E."/>
            <person name="Obata T."/>
            <person name="Meyer E."/>
            <person name="Brennicke A."/>
            <person name="Takenaka M."/>
        </authorList>
    </citation>
    <scope>HOMODIMERIZATION</scope>
    <scope>INTERACTION WITH MORF8/RIP1 AND MORF9/RIP9</scope>
    <scope>SUBCELLULAR LOCATION</scope>
</reference>
<reference key="12">
    <citation type="journal article" date="2015" name="Photosyn. Res.">
        <title>PPR protein PDM1/SEL1 is involved in RNA editing and splicing of plastid genes in Arabidopsis thaliana.</title>
        <authorList>
            <person name="Zhang H.D."/>
            <person name="Cui Y.L."/>
            <person name="Huang C."/>
            <person name="Yin Q.Q."/>
            <person name="Qin X.M."/>
            <person name="Xu T."/>
            <person name="He X.F."/>
            <person name="Zhang Y."/>
            <person name="Li Z.R."/>
            <person name="Yang Z.N."/>
        </authorList>
    </citation>
    <scope>INTERACTION WITH PCMP-A2/PMD1</scope>
</reference>
<reference key="13">
    <citation type="journal article" date="2015" name="PLoS Genet.">
        <title>A zinc finger motif-containing protein is essential for chloroplast RNA editing.</title>
        <authorList>
            <person name="Sun T."/>
            <person name="Shi X."/>
            <person name="Friso G."/>
            <person name="Van Wijk K."/>
            <person name="Bentolila S."/>
            <person name="Hanson M.R."/>
        </authorList>
    </citation>
    <scope>INTERACTION WITH ORRM1</scope>
</reference>
<reference key="14">
    <citation type="journal article" date="2017" name="Plant Physiol.">
        <title>An organelle RNA recognition motif protein is required for photosynthetic subunit psbF transcript editing.</title>
        <authorList>
            <person name="Hackett J.B."/>
            <person name="Shi X."/>
            <person name="Kobylarz A.T."/>
            <person name="Lucas M.K."/>
            <person name="Wessendorf R.L."/>
            <person name="Hines K.M."/>
            <person name="Bentolila S."/>
            <person name="Hanson M.R."/>
            <person name="Lu Y."/>
        </authorList>
    </citation>
    <scope>INTERACTION WITH ORRM6</scope>
    <scope>SUBCELLULAR LOCATION</scope>
</reference>
<comment type="function">
    <text evidence="3 4 5">Involved in plastid rRNA processing and consequently in translation and early chloroplast differentiation (PubMed:12678554). Involved in organellar RNA editing. Required for the processing of multiple editing sites in plastids (PubMed:22411807, PubMed:23818871).</text>
</comment>
<comment type="subunit">
    <text evidence="4 6 7 8 9 10">Homodimer and heterodimer with MORF9 (PubMed:22411807, PubMed:25583991). Interacts with protoporphyrinogen oxidase 1 PPOX1 (PubMed:24497494). Heterodimers with MORF8/RIP1 and MORF9/RIP9 (PubMed:25583991). Interacts with PCMP-A2/PMD1 (PubMed:26123918). Interacts with ORRM1 (PubMed:25768119). Interacts with ORRM6 (PubMed:28213559).</text>
</comment>
<comment type="interaction">
    <interactant intactId="EBI-1998046">
        <id>O22793</id>
    </interactant>
    <interactant intactId="EBI-1536925">
        <id>Q9FYK5</id>
        <label>ESR2</label>
    </interactant>
    <organismsDiffer>false</organismsDiffer>
    <experiments>3</experiments>
</comment>
<comment type="interaction">
    <interactant intactId="EBI-1998046">
        <id>O22793</id>
    </interactant>
    <interactant intactId="EBI-25506855">
        <id>O23160</id>
        <label>MYB73</label>
    </interactant>
    <organismsDiffer>false</organismsDiffer>
    <experiments>3</experiments>
</comment>
<comment type="interaction">
    <interactant intactId="EBI-1998046">
        <id>O22793</id>
    </interactant>
    <interactant intactId="EBI-1764934">
        <id>P49598</id>
        <label>PP2CA</label>
    </interactant>
    <organismsDiffer>false</organismsDiffer>
    <experiments>3</experiments>
</comment>
<comment type="subcellular location">
    <subcellularLocation>
        <location evidence="3 7 10">Plastid</location>
        <location evidence="3 7 10">Chloroplast</location>
    </subcellularLocation>
</comment>
<comment type="disruption phenotype">
    <text evidence="3 4">Small plants with white leaves that do not contain chlorophyll. Mutant plants are unable to grow autotrophically on soil and flowers are sterile.</text>
</comment>
<comment type="similarity">
    <text>Belongs to the MORF family.</text>
</comment>
<comment type="sequence caution" evidence="14">
    <conflict type="frameshift">
        <sequence resource="EMBL-CDS" id="CAB06698"/>
    </conflict>
</comment>
<protein>
    <recommendedName>
        <fullName evidence="14">Multiple organellar RNA editing factor 2, chloroplastic</fullName>
    </recommendedName>
    <alternativeName>
        <fullName evidence="11">Protein DIFFERENTIATION AND GREENING-like 1</fullName>
        <shortName evidence="14">Protein DAG-like 1</shortName>
    </alternativeName>
    <alternativeName>
        <fullName evidence="13">RNA editing-interacting protein 2</fullName>
    </alternativeName>
</protein>